<comment type="similarity">
    <text evidence="1">Belongs to the dGTPase family. Type 2 subfamily.</text>
</comment>
<organism>
    <name type="scientific">Brucella suis biovar 1 (strain 1330)</name>
    <dbReference type="NCBI Taxonomy" id="204722"/>
    <lineage>
        <taxon>Bacteria</taxon>
        <taxon>Pseudomonadati</taxon>
        <taxon>Pseudomonadota</taxon>
        <taxon>Alphaproteobacteria</taxon>
        <taxon>Hyphomicrobiales</taxon>
        <taxon>Brucellaceae</taxon>
        <taxon>Brucella/Ochrobactrum group</taxon>
        <taxon>Brucella</taxon>
    </lineage>
</organism>
<dbReference type="EMBL" id="AE014291">
    <property type="protein sequence ID" value="AAN29804.1"/>
    <property type="molecule type" value="Genomic_DNA"/>
</dbReference>
<dbReference type="EMBL" id="CP002997">
    <property type="protein sequence ID" value="AEM18221.1"/>
    <property type="molecule type" value="Genomic_DNA"/>
</dbReference>
<dbReference type="RefSeq" id="WP_004683694.1">
    <property type="nucleotide sequence ID" value="NZ_KN046804.1"/>
</dbReference>
<dbReference type="SMR" id="P63934"/>
<dbReference type="KEGG" id="bms:BR0876"/>
<dbReference type="KEGG" id="bsi:BS1330_I0872"/>
<dbReference type="PATRIC" id="fig|204722.21.peg.2569"/>
<dbReference type="HOGENOM" id="CLU_028163_1_0_5"/>
<dbReference type="PhylomeDB" id="P63934"/>
<dbReference type="Proteomes" id="UP000007104">
    <property type="component" value="Chromosome I"/>
</dbReference>
<dbReference type="GO" id="GO:0008832">
    <property type="term" value="F:dGTPase activity"/>
    <property type="evidence" value="ECO:0007669"/>
    <property type="project" value="TreeGrafter"/>
</dbReference>
<dbReference type="GO" id="GO:0006203">
    <property type="term" value="P:dGTP catabolic process"/>
    <property type="evidence" value="ECO:0007669"/>
    <property type="project" value="TreeGrafter"/>
</dbReference>
<dbReference type="CDD" id="cd00077">
    <property type="entry name" value="HDc"/>
    <property type="match status" value="1"/>
</dbReference>
<dbReference type="Gene3D" id="1.10.3210.10">
    <property type="entry name" value="Hypothetical protein af1432"/>
    <property type="match status" value="1"/>
</dbReference>
<dbReference type="HAMAP" id="MF_01212">
    <property type="entry name" value="dGTPase_type2"/>
    <property type="match status" value="1"/>
</dbReference>
<dbReference type="InterPro" id="IPR006261">
    <property type="entry name" value="dGTPase"/>
</dbReference>
<dbReference type="InterPro" id="IPR050135">
    <property type="entry name" value="dGTPase-like"/>
</dbReference>
<dbReference type="InterPro" id="IPR023023">
    <property type="entry name" value="dNTPase_2"/>
</dbReference>
<dbReference type="InterPro" id="IPR003607">
    <property type="entry name" value="HD/PDEase_dom"/>
</dbReference>
<dbReference type="InterPro" id="IPR006674">
    <property type="entry name" value="HD_domain"/>
</dbReference>
<dbReference type="InterPro" id="IPR006675">
    <property type="entry name" value="HDIG_dom"/>
</dbReference>
<dbReference type="InterPro" id="IPR026875">
    <property type="entry name" value="PHydrolase_assoc_dom"/>
</dbReference>
<dbReference type="NCBIfam" id="TIGR01353">
    <property type="entry name" value="dGTP_triPase"/>
    <property type="match status" value="1"/>
</dbReference>
<dbReference type="NCBIfam" id="TIGR00277">
    <property type="entry name" value="HDIG"/>
    <property type="match status" value="1"/>
</dbReference>
<dbReference type="NCBIfam" id="NF002326">
    <property type="entry name" value="PRK01286.1-1"/>
    <property type="match status" value="1"/>
</dbReference>
<dbReference type="NCBIfam" id="NF002328">
    <property type="entry name" value="PRK01286.1-3"/>
    <property type="match status" value="1"/>
</dbReference>
<dbReference type="PANTHER" id="PTHR11373:SF43">
    <property type="entry name" value="DEOXYGUANOSINETRIPHOSPHATE TRIPHOSPHOHYDROLASE-LIKE PROTEIN"/>
    <property type="match status" value="1"/>
</dbReference>
<dbReference type="PANTHER" id="PTHR11373">
    <property type="entry name" value="DEOXYNUCLEOSIDE TRIPHOSPHATE TRIPHOSPHOHYDROLASE"/>
    <property type="match status" value="1"/>
</dbReference>
<dbReference type="Pfam" id="PF01966">
    <property type="entry name" value="HD"/>
    <property type="match status" value="1"/>
</dbReference>
<dbReference type="Pfam" id="PF13286">
    <property type="entry name" value="HD_assoc"/>
    <property type="match status" value="1"/>
</dbReference>
<dbReference type="SMART" id="SM00471">
    <property type="entry name" value="HDc"/>
    <property type="match status" value="1"/>
</dbReference>
<dbReference type="SUPFAM" id="SSF109604">
    <property type="entry name" value="HD-domain/PDEase-like"/>
    <property type="match status" value="1"/>
</dbReference>
<dbReference type="PROSITE" id="PS51831">
    <property type="entry name" value="HD"/>
    <property type="match status" value="1"/>
</dbReference>
<keyword id="KW-0378">Hydrolase</keyword>
<accession>P63934</accession>
<accession>G0K9A4</accession>
<accession>Q8YGR8</accession>
<reference key="1">
    <citation type="journal article" date="2002" name="Proc. Natl. Acad. Sci. U.S.A.">
        <title>The Brucella suis genome reveals fundamental similarities between animal and plant pathogens and symbionts.</title>
        <authorList>
            <person name="Paulsen I.T."/>
            <person name="Seshadri R."/>
            <person name="Nelson K.E."/>
            <person name="Eisen J.A."/>
            <person name="Heidelberg J.F."/>
            <person name="Read T.D."/>
            <person name="Dodson R.J."/>
            <person name="Umayam L.A."/>
            <person name="Brinkac L.M."/>
            <person name="Beanan M.J."/>
            <person name="Daugherty S.C."/>
            <person name="DeBoy R.T."/>
            <person name="Durkin A.S."/>
            <person name="Kolonay J.F."/>
            <person name="Madupu R."/>
            <person name="Nelson W.C."/>
            <person name="Ayodeji B."/>
            <person name="Kraul M."/>
            <person name="Shetty J."/>
            <person name="Malek J.A."/>
            <person name="Van Aken S.E."/>
            <person name="Riedmuller S."/>
            <person name="Tettelin H."/>
            <person name="Gill S.R."/>
            <person name="White O."/>
            <person name="Salzberg S.L."/>
            <person name="Hoover D.L."/>
            <person name="Lindler L.E."/>
            <person name="Halling S.M."/>
            <person name="Boyle S.M."/>
            <person name="Fraser C.M."/>
        </authorList>
    </citation>
    <scope>NUCLEOTIDE SEQUENCE [LARGE SCALE GENOMIC DNA]</scope>
    <source>
        <strain>1330</strain>
    </source>
</reference>
<reference key="2">
    <citation type="journal article" date="2011" name="J. Bacteriol.">
        <title>Revised genome sequence of Brucella suis 1330.</title>
        <authorList>
            <person name="Tae H."/>
            <person name="Shallom S."/>
            <person name="Settlage R."/>
            <person name="Preston D."/>
            <person name="Adams L.G."/>
            <person name="Garner H.R."/>
        </authorList>
    </citation>
    <scope>NUCLEOTIDE SEQUENCE [LARGE SCALE GENOMIC DNA]</scope>
    <source>
        <strain>1330</strain>
    </source>
</reference>
<evidence type="ECO:0000255" key="1">
    <source>
        <dbReference type="HAMAP-Rule" id="MF_01212"/>
    </source>
</evidence>
<evidence type="ECO:0000255" key="2">
    <source>
        <dbReference type="PROSITE-ProRule" id="PRU01175"/>
    </source>
</evidence>
<evidence type="ECO:0000256" key="3">
    <source>
        <dbReference type="SAM" id="MobiDB-lite"/>
    </source>
</evidence>
<proteinExistence type="inferred from homology"/>
<gene>
    <name type="primary">dgt</name>
    <name type="ordered locus">BR0876</name>
    <name type="ordered locus">BS1330_I0872</name>
</gene>
<protein>
    <recommendedName>
        <fullName evidence="1">Deoxyguanosinetriphosphate triphosphohydrolase-like protein</fullName>
    </recommendedName>
</protein>
<feature type="chain" id="PRO_0000205297" description="Deoxyguanosinetriphosphate triphosphohydrolase-like protein">
    <location>
        <begin position="1"/>
        <end position="402"/>
    </location>
</feature>
<feature type="domain" description="HD" evidence="2">
    <location>
        <begin position="73"/>
        <end position="217"/>
    </location>
</feature>
<feature type="region of interest" description="Disordered" evidence="3">
    <location>
        <begin position="20"/>
        <end position="39"/>
    </location>
</feature>
<sequence length="402" mass="45727">MSLEGIGFGYRERAPYASNPAFSRGRLVPEPESPTRTPFQRDRDRIIHSTAFRRLKHKTQVFIAHEGDHYRTRLTHTIEVAQIARALARALRLDEDLAEAVALVHDFGHTPFGHTGEDALNERMKNFGGFDHNAQSLRIVTKLEHRYADFDGLNLSWETLEGLVKHNGPLLGPYAAHPDIPVPQPILDFNARYDLELSRFASLEAQCAAIADDIAYNAHDIDDGLRAGLLTLESLDEVPLAKRLLDIVRTRYPNLDPVRTGHELVRRQITIMVEDVIEEAQRRLASARPGTMEDVHNQPRALVGFSDAMRAEEKVLKRFLFKNLYFHESVVVRRHAADRIVQDLFDACFTDPSLMPDEWRLGCEALDKAALARRVADYLAGMTDNYAVREHRRLFDRTPDLA</sequence>
<name>DGTL1_BRUSU</name>